<feature type="chain" id="PRO_0000060175" description="Spermidine/putrescine transport system permease protein PotB">
    <location>
        <begin position="1"/>
        <end position="287"/>
    </location>
</feature>
<feature type="topological domain" description="Cytoplasmic" evidence="2">
    <location>
        <begin position="1"/>
        <end position="10"/>
    </location>
</feature>
<feature type="transmembrane region" description="Helical" evidence="3">
    <location>
        <begin position="11"/>
        <end position="31"/>
    </location>
</feature>
<feature type="topological domain" description="Periplasmic" evidence="2">
    <location>
        <begin position="32"/>
        <end position="70"/>
    </location>
</feature>
<feature type="transmembrane region" description="Helical" evidence="3">
    <location>
        <begin position="71"/>
        <end position="91"/>
    </location>
</feature>
<feature type="topological domain" description="Cytoplasmic" evidence="2">
    <location>
        <begin position="92"/>
        <end position="99"/>
    </location>
</feature>
<feature type="transmembrane region" description="Helical" evidence="3">
    <location>
        <begin position="100"/>
        <end position="120"/>
    </location>
</feature>
<feature type="topological domain" description="Periplasmic" evidence="2">
    <location>
        <begin position="121"/>
        <end position="145"/>
    </location>
</feature>
<feature type="transmembrane region" description="Helical" evidence="3">
    <location>
        <begin position="146"/>
        <end position="166"/>
    </location>
</feature>
<feature type="topological domain" description="Cytoplasmic" evidence="2">
    <location>
        <begin position="167"/>
        <end position="197"/>
    </location>
</feature>
<feature type="transmembrane region" description="Helical" evidence="3">
    <location>
        <begin position="198"/>
        <end position="218"/>
    </location>
</feature>
<feature type="topological domain" description="Periplasmic" evidence="2">
    <location>
        <begin position="219"/>
        <end position="251"/>
    </location>
</feature>
<feature type="transmembrane region" description="Helical" evidence="3">
    <location>
        <begin position="252"/>
        <end position="272"/>
    </location>
</feature>
<feature type="topological domain" description="Cytoplasmic" evidence="2">
    <location>
        <begin position="273"/>
        <end position="287"/>
    </location>
</feature>
<feature type="domain" description="ABC transmembrane type-1" evidence="3">
    <location>
        <begin position="65"/>
        <end position="271"/>
    </location>
</feature>
<keyword id="KW-0997">Cell inner membrane</keyword>
<keyword id="KW-1003">Cell membrane</keyword>
<keyword id="KW-0472">Membrane</keyword>
<keyword id="KW-0812">Transmembrane</keyword>
<keyword id="KW-1133">Transmembrane helix</keyword>
<keyword id="KW-0813">Transport</keyword>
<proteinExistence type="inferred from homology"/>
<dbReference type="EMBL" id="AL513382">
    <property type="protein sequence ID" value="CAD08349.1"/>
    <property type="molecule type" value="Genomic_DNA"/>
</dbReference>
<dbReference type="EMBL" id="AE014613">
    <property type="protein sequence ID" value="AAO69320.1"/>
    <property type="molecule type" value="Genomic_DNA"/>
</dbReference>
<dbReference type="RefSeq" id="NP_455717.1">
    <property type="nucleotide sequence ID" value="NC_003198.1"/>
</dbReference>
<dbReference type="RefSeq" id="WP_000799391.1">
    <property type="nucleotide sequence ID" value="NZ_WSUR01000030.1"/>
</dbReference>
<dbReference type="SMR" id="P0A2J8"/>
<dbReference type="STRING" id="220341.gene:17585229"/>
<dbReference type="KEGG" id="stt:t1695"/>
<dbReference type="KEGG" id="sty:STY1265"/>
<dbReference type="PATRIC" id="fig|220341.7.peg.1270"/>
<dbReference type="eggNOG" id="COG1176">
    <property type="taxonomic scope" value="Bacteria"/>
</dbReference>
<dbReference type="HOGENOM" id="CLU_016047_18_3_6"/>
<dbReference type="OMA" id="VIRTYAW"/>
<dbReference type="OrthoDB" id="9807047at2"/>
<dbReference type="Proteomes" id="UP000000541">
    <property type="component" value="Chromosome"/>
</dbReference>
<dbReference type="Proteomes" id="UP000002670">
    <property type="component" value="Chromosome"/>
</dbReference>
<dbReference type="GO" id="GO:0005886">
    <property type="term" value="C:plasma membrane"/>
    <property type="evidence" value="ECO:0007669"/>
    <property type="project" value="UniProtKB-SubCell"/>
</dbReference>
<dbReference type="GO" id="GO:0055085">
    <property type="term" value="P:transmembrane transport"/>
    <property type="evidence" value="ECO:0007669"/>
    <property type="project" value="InterPro"/>
</dbReference>
<dbReference type="CDD" id="cd06261">
    <property type="entry name" value="TM_PBP2"/>
    <property type="match status" value="1"/>
</dbReference>
<dbReference type="FunFam" id="1.10.3720.10:FF:000029">
    <property type="entry name" value="Spermidine/putrescine ABC transporter permease PotB"/>
    <property type="match status" value="1"/>
</dbReference>
<dbReference type="Gene3D" id="1.10.3720.10">
    <property type="entry name" value="MetI-like"/>
    <property type="match status" value="1"/>
</dbReference>
<dbReference type="InterPro" id="IPR000515">
    <property type="entry name" value="MetI-like"/>
</dbReference>
<dbReference type="InterPro" id="IPR035906">
    <property type="entry name" value="MetI-like_sf"/>
</dbReference>
<dbReference type="NCBIfam" id="NF007044">
    <property type="entry name" value="PRK09497.1"/>
    <property type="match status" value="1"/>
</dbReference>
<dbReference type="PANTHER" id="PTHR42929:SF1">
    <property type="entry name" value="INNER MEMBRANE ABC TRANSPORTER PERMEASE PROTEIN YDCU-RELATED"/>
    <property type="match status" value="1"/>
</dbReference>
<dbReference type="PANTHER" id="PTHR42929">
    <property type="entry name" value="INNER MEMBRANE ABC TRANSPORTER PERMEASE PROTEIN YDCU-RELATED-RELATED"/>
    <property type="match status" value="1"/>
</dbReference>
<dbReference type="Pfam" id="PF00528">
    <property type="entry name" value="BPD_transp_1"/>
    <property type="match status" value="1"/>
</dbReference>
<dbReference type="SUPFAM" id="SSF161098">
    <property type="entry name" value="MetI-like"/>
    <property type="match status" value="1"/>
</dbReference>
<dbReference type="PROSITE" id="PS50928">
    <property type="entry name" value="ABC_TM1"/>
    <property type="match status" value="1"/>
</dbReference>
<accession>P0A2J8</accession>
<accession>Q56060</accession>
<reference key="1">
    <citation type="journal article" date="2001" name="Nature">
        <title>Complete genome sequence of a multiple drug resistant Salmonella enterica serovar Typhi CT18.</title>
        <authorList>
            <person name="Parkhill J."/>
            <person name="Dougan G."/>
            <person name="James K.D."/>
            <person name="Thomson N.R."/>
            <person name="Pickard D."/>
            <person name="Wain J."/>
            <person name="Churcher C.M."/>
            <person name="Mungall K.L."/>
            <person name="Bentley S.D."/>
            <person name="Holden M.T.G."/>
            <person name="Sebaihia M."/>
            <person name="Baker S."/>
            <person name="Basham D."/>
            <person name="Brooks K."/>
            <person name="Chillingworth T."/>
            <person name="Connerton P."/>
            <person name="Cronin A."/>
            <person name="Davis P."/>
            <person name="Davies R.M."/>
            <person name="Dowd L."/>
            <person name="White N."/>
            <person name="Farrar J."/>
            <person name="Feltwell T."/>
            <person name="Hamlin N."/>
            <person name="Haque A."/>
            <person name="Hien T.T."/>
            <person name="Holroyd S."/>
            <person name="Jagels K."/>
            <person name="Krogh A."/>
            <person name="Larsen T.S."/>
            <person name="Leather S."/>
            <person name="Moule S."/>
            <person name="O'Gaora P."/>
            <person name="Parry C."/>
            <person name="Quail M.A."/>
            <person name="Rutherford K.M."/>
            <person name="Simmonds M."/>
            <person name="Skelton J."/>
            <person name="Stevens K."/>
            <person name="Whitehead S."/>
            <person name="Barrell B.G."/>
        </authorList>
    </citation>
    <scope>NUCLEOTIDE SEQUENCE [LARGE SCALE GENOMIC DNA]</scope>
    <source>
        <strain>CT18</strain>
    </source>
</reference>
<reference key="2">
    <citation type="journal article" date="2003" name="J. Bacteriol.">
        <title>Comparative genomics of Salmonella enterica serovar Typhi strains Ty2 and CT18.</title>
        <authorList>
            <person name="Deng W."/>
            <person name="Liou S.-R."/>
            <person name="Plunkett G. III"/>
            <person name="Mayhew G.F."/>
            <person name="Rose D.J."/>
            <person name="Burland V."/>
            <person name="Kodoyianni V."/>
            <person name="Schwartz D.C."/>
            <person name="Blattner F.R."/>
        </authorList>
    </citation>
    <scope>NUCLEOTIDE SEQUENCE [LARGE SCALE GENOMIC DNA]</scope>
    <source>
        <strain>ATCC 700931 / Ty2</strain>
    </source>
</reference>
<protein>
    <recommendedName>
        <fullName>Spermidine/putrescine transport system permease protein PotB</fullName>
    </recommendedName>
</protein>
<evidence type="ECO:0000250" key="1"/>
<evidence type="ECO:0000255" key="2"/>
<evidence type="ECO:0000255" key="3">
    <source>
        <dbReference type="PROSITE-ProRule" id="PRU00441"/>
    </source>
</evidence>
<evidence type="ECO:0000305" key="4"/>
<sequence>MKNTSKFQNVVIVTIVGWLVLFVFLPNLMIIGTSFLTRDDASFVKMVFTLDNYARLLDPLYFEVLLHSLNMALIATLSCLVLGYPFAWFLAKLPEKIRPLLLFLLIVPFWTNSLIRIYGLKIFLSTKGYLNEFLLWLGVIDTPIRIMFTPSAVIIGLVYILLPFMVMPLYSSIEKLDKPLLEAARDLGASKMQTFIRIIIPLTMPGIVAGCLLVMLPAMGLFYVSDLMGGAKNLLIGNVIKVQFLNIRDWPFGAATSITLTIVMGLMLLIYWRASRLLNKKVSDISD</sequence>
<comment type="function">
    <text evidence="1">Required for the activity of the bacterial periplasmic transport system of putrescine and spermidine.</text>
</comment>
<comment type="subcellular location">
    <subcellularLocation>
        <location evidence="1">Cell inner membrane</location>
        <topology evidence="3">Multi-pass membrane protein</topology>
    </subcellularLocation>
</comment>
<comment type="similarity">
    <text evidence="4">Belongs to the binding-protein-dependent transport system permease family. CysTW subfamily.</text>
</comment>
<gene>
    <name type="primary">potB</name>
    <name type="ordered locus">STY1265</name>
    <name type="ordered locus">t1695</name>
</gene>
<organism>
    <name type="scientific">Salmonella typhi</name>
    <dbReference type="NCBI Taxonomy" id="90370"/>
    <lineage>
        <taxon>Bacteria</taxon>
        <taxon>Pseudomonadati</taxon>
        <taxon>Pseudomonadota</taxon>
        <taxon>Gammaproteobacteria</taxon>
        <taxon>Enterobacterales</taxon>
        <taxon>Enterobacteriaceae</taxon>
        <taxon>Salmonella</taxon>
    </lineage>
</organism>
<name>POTB_SALTI</name>